<evidence type="ECO:0000255" key="1">
    <source>
        <dbReference type="HAMAP-Rule" id="MF_00107"/>
    </source>
</evidence>
<keyword id="KW-0414">Isoprene biosynthesis</keyword>
<keyword id="KW-0456">Lyase</keyword>
<keyword id="KW-0479">Metal-binding</keyword>
<keyword id="KW-1185">Reference proteome</keyword>
<feature type="chain" id="PRO_1000117416" description="2-C-methyl-D-erythritol 2,4-cyclodiphosphate synthase">
    <location>
        <begin position="1"/>
        <end position="167"/>
    </location>
</feature>
<feature type="binding site" evidence="1">
    <location>
        <begin position="10"/>
        <end position="12"/>
    </location>
    <ligand>
        <name>4-CDP-2-C-methyl-D-erythritol 2-phosphate</name>
        <dbReference type="ChEBI" id="CHEBI:57919"/>
    </ligand>
</feature>
<feature type="binding site" evidence="1">
    <location>
        <position position="10"/>
    </location>
    <ligand>
        <name>a divalent metal cation</name>
        <dbReference type="ChEBI" id="CHEBI:60240"/>
    </ligand>
</feature>
<feature type="binding site" evidence="1">
    <location>
        <position position="12"/>
    </location>
    <ligand>
        <name>a divalent metal cation</name>
        <dbReference type="ChEBI" id="CHEBI:60240"/>
    </ligand>
</feature>
<feature type="binding site" evidence="1">
    <location>
        <begin position="36"/>
        <end position="37"/>
    </location>
    <ligand>
        <name>4-CDP-2-C-methyl-D-erythritol 2-phosphate</name>
        <dbReference type="ChEBI" id="CHEBI:57919"/>
    </ligand>
</feature>
<feature type="binding site" evidence="1">
    <location>
        <position position="44"/>
    </location>
    <ligand>
        <name>a divalent metal cation</name>
        <dbReference type="ChEBI" id="CHEBI:60240"/>
    </ligand>
</feature>
<feature type="binding site" evidence="1">
    <location>
        <begin position="58"/>
        <end position="60"/>
    </location>
    <ligand>
        <name>4-CDP-2-C-methyl-D-erythritol 2-phosphate</name>
        <dbReference type="ChEBI" id="CHEBI:57919"/>
    </ligand>
</feature>
<feature type="binding site" evidence="1">
    <location>
        <begin position="63"/>
        <end position="67"/>
    </location>
    <ligand>
        <name>4-CDP-2-C-methyl-D-erythritol 2-phosphate</name>
        <dbReference type="ChEBI" id="CHEBI:57919"/>
    </ligand>
</feature>
<feature type="binding site" evidence="1">
    <location>
        <begin position="134"/>
        <end position="137"/>
    </location>
    <ligand>
        <name>4-CDP-2-C-methyl-D-erythritol 2-phosphate</name>
        <dbReference type="ChEBI" id="CHEBI:57919"/>
    </ligand>
</feature>
<feature type="binding site" evidence="1">
    <location>
        <position position="141"/>
    </location>
    <ligand>
        <name>4-CDP-2-C-methyl-D-erythritol 2-phosphate</name>
        <dbReference type="ChEBI" id="CHEBI:57919"/>
    </ligand>
</feature>
<feature type="binding site" evidence="1">
    <location>
        <position position="144"/>
    </location>
    <ligand>
        <name>4-CDP-2-C-methyl-D-erythritol 2-phosphate</name>
        <dbReference type="ChEBI" id="CHEBI:57919"/>
    </ligand>
</feature>
<feature type="site" description="Transition state stabilizer" evidence="1">
    <location>
        <position position="36"/>
    </location>
</feature>
<feature type="site" description="Transition state stabilizer" evidence="1">
    <location>
        <position position="135"/>
    </location>
</feature>
<comment type="function">
    <text evidence="1">Involved in the biosynthesis of isopentenyl diphosphate (IPP) and dimethylallyl diphosphate (DMAPP), two major building blocks of isoprenoid compounds. Catalyzes the conversion of 4-diphosphocytidyl-2-C-methyl-D-erythritol 2-phosphate (CDP-ME2P) to 2-C-methyl-D-erythritol 2,4-cyclodiphosphate (ME-CPP) with a corresponding release of cytidine 5-monophosphate (CMP).</text>
</comment>
<comment type="catalytic activity">
    <reaction evidence="1">
        <text>4-CDP-2-C-methyl-D-erythritol 2-phosphate = 2-C-methyl-D-erythritol 2,4-cyclic diphosphate + CMP</text>
        <dbReference type="Rhea" id="RHEA:23864"/>
        <dbReference type="ChEBI" id="CHEBI:57919"/>
        <dbReference type="ChEBI" id="CHEBI:58483"/>
        <dbReference type="ChEBI" id="CHEBI:60377"/>
        <dbReference type="EC" id="4.6.1.12"/>
    </reaction>
</comment>
<comment type="cofactor">
    <cofactor evidence="1">
        <name>a divalent metal cation</name>
        <dbReference type="ChEBI" id="CHEBI:60240"/>
    </cofactor>
    <text evidence="1">Binds 1 divalent metal cation per subunit.</text>
</comment>
<comment type="pathway">
    <text evidence="1">Isoprenoid biosynthesis; isopentenyl diphosphate biosynthesis via DXP pathway; isopentenyl diphosphate from 1-deoxy-D-xylulose 5-phosphate: step 4/6.</text>
</comment>
<comment type="subunit">
    <text evidence="1">Homotrimer.</text>
</comment>
<comment type="similarity">
    <text evidence="1">Belongs to the IspF family.</text>
</comment>
<reference key="1">
    <citation type="journal article" date="2008" name="Science">
        <title>Genome of an endosymbiont coupling N2 fixation to cellulolysis within RT protist cells in termite gut.</title>
        <authorList>
            <person name="Hongoh Y."/>
            <person name="Sharma V.K."/>
            <person name="Prakash T."/>
            <person name="Noda S."/>
            <person name="Toh H."/>
            <person name="Taylor T.D."/>
            <person name="Kudo T."/>
            <person name="Sakaki Y."/>
            <person name="Toyoda A."/>
            <person name="Hattori M."/>
            <person name="Ohkuma M."/>
        </authorList>
    </citation>
    <scope>NUCLEOTIDE SEQUENCE [LARGE SCALE GENOMIC DNA]</scope>
</reference>
<gene>
    <name evidence="1" type="primary">ispF</name>
    <name type="ordered locus">CFPG_667</name>
</gene>
<dbReference type="EC" id="4.6.1.12" evidence="1"/>
<dbReference type="EMBL" id="AP010656">
    <property type="protein sequence ID" value="BAG83930.1"/>
    <property type="molecule type" value="Genomic_DNA"/>
</dbReference>
<dbReference type="RefSeq" id="WP_012573690.1">
    <property type="nucleotide sequence ID" value="NC_011565.1"/>
</dbReference>
<dbReference type="SMR" id="B6YRV8"/>
<dbReference type="STRING" id="511995.CFPG_667"/>
<dbReference type="KEGG" id="aps:CFPG_667"/>
<dbReference type="eggNOG" id="COG0245">
    <property type="taxonomic scope" value="Bacteria"/>
</dbReference>
<dbReference type="HOGENOM" id="CLU_084630_2_0_10"/>
<dbReference type="OrthoDB" id="9804336at2"/>
<dbReference type="UniPathway" id="UPA00056">
    <property type="reaction ID" value="UER00095"/>
</dbReference>
<dbReference type="Proteomes" id="UP000000723">
    <property type="component" value="Chromosome"/>
</dbReference>
<dbReference type="GO" id="GO:0008685">
    <property type="term" value="F:2-C-methyl-D-erythritol 2,4-cyclodiphosphate synthase activity"/>
    <property type="evidence" value="ECO:0007669"/>
    <property type="project" value="UniProtKB-UniRule"/>
</dbReference>
<dbReference type="GO" id="GO:0046872">
    <property type="term" value="F:metal ion binding"/>
    <property type="evidence" value="ECO:0007669"/>
    <property type="project" value="UniProtKB-KW"/>
</dbReference>
<dbReference type="GO" id="GO:0019288">
    <property type="term" value="P:isopentenyl diphosphate biosynthetic process, methylerythritol 4-phosphate pathway"/>
    <property type="evidence" value="ECO:0007669"/>
    <property type="project" value="UniProtKB-UniRule"/>
</dbReference>
<dbReference type="GO" id="GO:0016114">
    <property type="term" value="P:terpenoid biosynthetic process"/>
    <property type="evidence" value="ECO:0007669"/>
    <property type="project" value="InterPro"/>
</dbReference>
<dbReference type="CDD" id="cd00554">
    <property type="entry name" value="MECDP_synthase"/>
    <property type="match status" value="1"/>
</dbReference>
<dbReference type="Gene3D" id="3.30.1330.50">
    <property type="entry name" value="2-C-methyl-D-erythritol 2,4-cyclodiphosphate synthase"/>
    <property type="match status" value="1"/>
</dbReference>
<dbReference type="HAMAP" id="MF_00107">
    <property type="entry name" value="IspF"/>
    <property type="match status" value="1"/>
</dbReference>
<dbReference type="InterPro" id="IPR003526">
    <property type="entry name" value="MECDP_synthase"/>
</dbReference>
<dbReference type="InterPro" id="IPR020555">
    <property type="entry name" value="MECDP_synthase_CS"/>
</dbReference>
<dbReference type="InterPro" id="IPR036571">
    <property type="entry name" value="MECDP_synthase_sf"/>
</dbReference>
<dbReference type="NCBIfam" id="TIGR00151">
    <property type="entry name" value="ispF"/>
    <property type="match status" value="1"/>
</dbReference>
<dbReference type="PANTHER" id="PTHR43181">
    <property type="entry name" value="2-C-METHYL-D-ERYTHRITOL 2,4-CYCLODIPHOSPHATE SYNTHASE, CHLOROPLASTIC"/>
    <property type="match status" value="1"/>
</dbReference>
<dbReference type="PANTHER" id="PTHR43181:SF1">
    <property type="entry name" value="2-C-METHYL-D-ERYTHRITOL 2,4-CYCLODIPHOSPHATE SYNTHASE, CHLOROPLASTIC"/>
    <property type="match status" value="1"/>
</dbReference>
<dbReference type="Pfam" id="PF02542">
    <property type="entry name" value="YgbB"/>
    <property type="match status" value="1"/>
</dbReference>
<dbReference type="SUPFAM" id="SSF69765">
    <property type="entry name" value="IpsF-like"/>
    <property type="match status" value="1"/>
</dbReference>
<dbReference type="PROSITE" id="PS01350">
    <property type="entry name" value="ISPF"/>
    <property type="match status" value="1"/>
</dbReference>
<proteinExistence type="inferred from homology"/>
<protein>
    <recommendedName>
        <fullName evidence="1">2-C-methyl-D-erythritol 2,4-cyclodiphosphate synthase</fullName>
        <shortName evidence="1">MECDP-synthase</shortName>
        <shortName evidence="1">MECPP-synthase</shortName>
        <shortName evidence="1">MECPS</shortName>
        <ecNumber evidence="1">4.6.1.12</ecNumber>
    </recommendedName>
</protein>
<sequence>MKIRIGFGYDVHPLVMNYNLWLGGIKIPYEKGLKGHSDADVLIHALCDALLGAADIGNIGTNFPNTNKKLRNIDSKILLKQTMSFIYSKNYELNNADITVCIEQPKLNPFIPQMKTCLAEIMQTDKGNISIKATTSEKMGFIGREEGIAVFATVLITPINEIGISCQ</sequence>
<organism>
    <name type="scientific">Azobacteroides pseudotrichonymphae genomovar. CFP2</name>
    <dbReference type="NCBI Taxonomy" id="511995"/>
    <lineage>
        <taxon>Bacteria</taxon>
        <taxon>Pseudomonadati</taxon>
        <taxon>Bacteroidota</taxon>
        <taxon>Bacteroidia</taxon>
        <taxon>Bacteroidales</taxon>
        <taxon>Candidatus Azobacteroides</taxon>
    </lineage>
</organism>
<name>ISPF_AZOPC</name>
<accession>B6YRV8</accession>